<protein>
    <recommendedName>
        <fullName evidence="1">RNA polymerase sigma factor RpoH</fullName>
    </recommendedName>
    <alternativeName>
        <fullName evidence="1">RNA polymerase sigma-32 factor</fullName>
    </alternativeName>
</protein>
<evidence type="ECO:0000255" key="1">
    <source>
        <dbReference type="HAMAP-Rule" id="MF_00961"/>
    </source>
</evidence>
<proteinExistence type="inferred from homology"/>
<accession>P50507</accession>
<dbReference type="EMBL" id="D50828">
    <property type="protein sequence ID" value="BAA09439.1"/>
    <property type="molecule type" value="Genomic_DNA"/>
</dbReference>
<dbReference type="PIR" id="S60164">
    <property type="entry name" value="S60164"/>
</dbReference>
<dbReference type="RefSeq" id="WP_003491840.1">
    <property type="nucleotide sequence ID" value="NZ_WJOK01000019.1"/>
</dbReference>
<dbReference type="SMR" id="P50507"/>
<dbReference type="GeneID" id="97365178"/>
<dbReference type="eggNOG" id="COG0568">
    <property type="taxonomic scope" value="Bacteria"/>
</dbReference>
<dbReference type="OrthoDB" id="9809557at2"/>
<dbReference type="GO" id="GO:0005737">
    <property type="term" value="C:cytoplasm"/>
    <property type="evidence" value="ECO:0007669"/>
    <property type="project" value="UniProtKB-SubCell"/>
</dbReference>
<dbReference type="GO" id="GO:0003677">
    <property type="term" value="F:DNA binding"/>
    <property type="evidence" value="ECO:0007669"/>
    <property type="project" value="UniProtKB-UniRule"/>
</dbReference>
<dbReference type="GO" id="GO:0016987">
    <property type="term" value="F:sigma factor activity"/>
    <property type="evidence" value="ECO:0007669"/>
    <property type="project" value="UniProtKB-UniRule"/>
</dbReference>
<dbReference type="GO" id="GO:0006352">
    <property type="term" value="P:DNA-templated transcription initiation"/>
    <property type="evidence" value="ECO:0007669"/>
    <property type="project" value="UniProtKB-UniRule"/>
</dbReference>
<dbReference type="GO" id="GO:0009408">
    <property type="term" value="P:response to heat"/>
    <property type="evidence" value="ECO:0007669"/>
    <property type="project" value="UniProtKB-UniRule"/>
</dbReference>
<dbReference type="CDD" id="cd06171">
    <property type="entry name" value="Sigma70_r4"/>
    <property type="match status" value="1"/>
</dbReference>
<dbReference type="Gene3D" id="1.20.120.1810">
    <property type="match status" value="1"/>
</dbReference>
<dbReference type="Gene3D" id="1.20.140.160">
    <property type="match status" value="1"/>
</dbReference>
<dbReference type="HAMAP" id="MF_00961">
    <property type="entry name" value="Sigma70_RpoH"/>
    <property type="match status" value="1"/>
</dbReference>
<dbReference type="InterPro" id="IPR014284">
    <property type="entry name" value="RNA_pol_sigma-70_dom"/>
</dbReference>
<dbReference type="InterPro" id="IPR000943">
    <property type="entry name" value="RNA_pol_sigma70"/>
</dbReference>
<dbReference type="InterPro" id="IPR009042">
    <property type="entry name" value="RNA_pol_sigma70_r1_2"/>
</dbReference>
<dbReference type="InterPro" id="IPR007627">
    <property type="entry name" value="RNA_pol_sigma70_r2"/>
</dbReference>
<dbReference type="InterPro" id="IPR007630">
    <property type="entry name" value="RNA_pol_sigma70_r4"/>
</dbReference>
<dbReference type="InterPro" id="IPR013325">
    <property type="entry name" value="RNA_pol_sigma_r2"/>
</dbReference>
<dbReference type="InterPro" id="IPR013324">
    <property type="entry name" value="RNA_pol_sigma_r3/r4-like"/>
</dbReference>
<dbReference type="InterPro" id="IPR012759">
    <property type="entry name" value="RNA_pol_sigma_RpoH_proteobac"/>
</dbReference>
<dbReference type="InterPro" id="IPR050813">
    <property type="entry name" value="Sigma-70_Factor"/>
</dbReference>
<dbReference type="NCBIfam" id="NF005143">
    <property type="entry name" value="PRK06596.1"/>
    <property type="match status" value="1"/>
</dbReference>
<dbReference type="NCBIfam" id="TIGR02392">
    <property type="entry name" value="rpoH_proteo"/>
    <property type="match status" value="1"/>
</dbReference>
<dbReference type="NCBIfam" id="TIGR02937">
    <property type="entry name" value="sigma70-ECF"/>
    <property type="match status" value="1"/>
</dbReference>
<dbReference type="PANTHER" id="PTHR30376:SF3">
    <property type="entry name" value="RNA POLYMERASE SIGMA FACTOR RPOH"/>
    <property type="match status" value="1"/>
</dbReference>
<dbReference type="PANTHER" id="PTHR30376">
    <property type="entry name" value="SIGMA FACTOR RPOH HEAT SHOCK RELATED"/>
    <property type="match status" value="1"/>
</dbReference>
<dbReference type="Pfam" id="PF00140">
    <property type="entry name" value="Sigma70_r1_2"/>
    <property type="match status" value="1"/>
</dbReference>
<dbReference type="Pfam" id="PF04542">
    <property type="entry name" value="Sigma70_r2"/>
    <property type="match status" value="1"/>
</dbReference>
<dbReference type="Pfam" id="PF04545">
    <property type="entry name" value="Sigma70_r4"/>
    <property type="match status" value="1"/>
</dbReference>
<dbReference type="PIRSF" id="PIRSF000770">
    <property type="entry name" value="RNA_pol_sigma-SigE/K"/>
    <property type="match status" value="1"/>
</dbReference>
<dbReference type="PRINTS" id="PR00046">
    <property type="entry name" value="SIGMA70FCT"/>
</dbReference>
<dbReference type="SUPFAM" id="SSF88946">
    <property type="entry name" value="Sigma2 domain of RNA polymerase sigma factors"/>
    <property type="match status" value="1"/>
</dbReference>
<dbReference type="SUPFAM" id="SSF88659">
    <property type="entry name" value="Sigma3 and sigma4 domains of RNA polymerase sigma factors"/>
    <property type="match status" value="1"/>
</dbReference>
<dbReference type="PROSITE" id="PS00715">
    <property type="entry name" value="SIGMA70_1"/>
    <property type="match status" value="1"/>
</dbReference>
<dbReference type="PROSITE" id="PS00716">
    <property type="entry name" value="SIGMA70_2"/>
    <property type="match status" value="1"/>
</dbReference>
<reference key="1">
    <citation type="journal article" date="1995" name="Nucleic Acids Res.">
        <title>Isolation and sequence analysis of rpoH genes encoding sigma 32 homologs from Gram-negative bacteria: conserved mRNA and protein segments for heat shock regulation.</title>
        <authorList>
            <person name="Nakahigashi K."/>
            <person name="Yanagi H."/>
            <person name="Yura T."/>
        </authorList>
    </citation>
    <scope>NUCLEOTIDE SEQUENCE [GENOMIC DNA]</scope>
    <source>
        <strain>IAM12544</strain>
    </source>
</reference>
<keyword id="KW-0963">Cytoplasm</keyword>
<keyword id="KW-0238">DNA-binding</keyword>
<keyword id="KW-0731">Sigma factor</keyword>
<keyword id="KW-0346">Stress response</keyword>
<keyword id="KW-0804">Transcription</keyword>
<keyword id="KW-0805">Transcription regulation</keyword>
<gene>
    <name evidence="1" type="primary">rpoH</name>
</gene>
<sequence length="300" mass="34418">MARNSLPTITAGEAGLNRYLDEIRKFPMLEPQEEYMLGKRYAEHGDRDAAHKLVTSHLRLVAKIAMGYRGYGLPIGEVVSEGNVGLMQAVKKFDPERGFRLATYAMWWIKASIQEYILRSWSLVKMGTTANQKRLFFNLRRLKGRIQAIDDGDLKPEHVKEIATKLQVSEEEVISMNRRLHGDASLNAPIKASEGESGQWQDWLVDDHESQEAVLIEQDELETRRRMLAKAMGVLNDRERRIFEARRLAEDPVTLEELSSEFDISRERVRQIEVRAFEKVQEAVQKEALEAARALRVVDA</sequence>
<name>RPOH_RHIRD</name>
<organism>
    <name type="scientific">Rhizobium radiobacter</name>
    <name type="common">Agrobacterium tumefaciens</name>
    <name type="synonym">Agrobacterium radiobacter</name>
    <dbReference type="NCBI Taxonomy" id="358"/>
    <lineage>
        <taxon>Bacteria</taxon>
        <taxon>Pseudomonadati</taxon>
        <taxon>Pseudomonadota</taxon>
        <taxon>Alphaproteobacteria</taxon>
        <taxon>Hyphomicrobiales</taxon>
        <taxon>Rhizobiaceae</taxon>
        <taxon>Rhizobium/Agrobacterium group</taxon>
        <taxon>Agrobacterium</taxon>
        <taxon>Agrobacterium tumefaciens complex</taxon>
    </lineage>
</organism>
<feature type="chain" id="PRO_0000093950" description="RNA polymerase sigma factor RpoH">
    <location>
        <begin position="1"/>
        <end position="300"/>
    </location>
</feature>
<feature type="DNA-binding region" description="H-T-H motif" evidence="1">
    <location>
        <begin position="255"/>
        <end position="274"/>
    </location>
</feature>
<feature type="region of interest" description="Sigma-70 factor domain-2" evidence="1">
    <location>
        <begin position="53"/>
        <end position="122"/>
    </location>
</feature>
<feature type="region of interest" description="Sigma-70 factor domain-4" evidence="1">
    <location>
        <begin position="231"/>
        <end position="282"/>
    </location>
</feature>
<feature type="short sequence motif" description="Interaction with polymerase core subunit RpoC">
    <location>
        <begin position="77"/>
        <end position="80"/>
    </location>
</feature>
<comment type="function">
    <text evidence="1">Sigma factors are initiation factors that promote the attachment of RNA polymerase to specific initiation sites and are then released. This sigma factor is involved in regulation of expression of heat shock genes.</text>
</comment>
<comment type="subunit">
    <text evidence="1">Interacts with the RNA polymerase core enzyme.</text>
</comment>
<comment type="subcellular location">
    <subcellularLocation>
        <location evidence="1">Cytoplasm</location>
    </subcellularLocation>
</comment>
<comment type="similarity">
    <text evidence="1">Belongs to the sigma-70 factor family. RpoH subfamily.</text>
</comment>